<protein>
    <recommendedName>
        <fullName evidence="1">NAD(P)H-quinone oxidoreductase subunit K, chloroplastic</fullName>
        <ecNumber evidence="1">7.1.1.-</ecNumber>
    </recommendedName>
    <alternativeName>
        <fullName evidence="1">NAD(P)H dehydrogenase subunit K</fullName>
    </alternativeName>
    <alternativeName>
        <fullName evidence="1">NADH-plastoquinone oxidoreductase subunit K</fullName>
    </alternativeName>
</protein>
<geneLocation type="chloroplast"/>
<name>NDHK_CARPA</name>
<feature type="chain" id="PRO_0000358527" description="NAD(P)H-quinone oxidoreductase subunit K, chloroplastic">
    <location>
        <begin position="1"/>
        <end position="225"/>
    </location>
</feature>
<feature type="binding site" evidence="1">
    <location>
        <position position="43"/>
    </location>
    <ligand>
        <name>[4Fe-4S] cluster</name>
        <dbReference type="ChEBI" id="CHEBI:49883"/>
    </ligand>
</feature>
<feature type="binding site" evidence="1">
    <location>
        <position position="44"/>
    </location>
    <ligand>
        <name>[4Fe-4S] cluster</name>
        <dbReference type="ChEBI" id="CHEBI:49883"/>
    </ligand>
</feature>
<feature type="binding site" evidence="1">
    <location>
        <position position="108"/>
    </location>
    <ligand>
        <name>[4Fe-4S] cluster</name>
        <dbReference type="ChEBI" id="CHEBI:49883"/>
    </ligand>
</feature>
<feature type="binding site" evidence="1">
    <location>
        <position position="139"/>
    </location>
    <ligand>
        <name>[4Fe-4S] cluster</name>
        <dbReference type="ChEBI" id="CHEBI:49883"/>
    </ligand>
</feature>
<comment type="function">
    <text evidence="1">NDH shuttles electrons from NAD(P)H:plastoquinone, via FMN and iron-sulfur (Fe-S) centers, to quinones in the photosynthetic chain and possibly in a chloroplast respiratory chain. The immediate electron acceptor for the enzyme in this species is believed to be plastoquinone. Couples the redox reaction to proton translocation, and thus conserves the redox energy in a proton gradient.</text>
</comment>
<comment type="catalytic activity">
    <reaction evidence="1">
        <text>a plastoquinone + NADH + (n+1) H(+)(in) = a plastoquinol + NAD(+) + n H(+)(out)</text>
        <dbReference type="Rhea" id="RHEA:42608"/>
        <dbReference type="Rhea" id="RHEA-COMP:9561"/>
        <dbReference type="Rhea" id="RHEA-COMP:9562"/>
        <dbReference type="ChEBI" id="CHEBI:15378"/>
        <dbReference type="ChEBI" id="CHEBI:17757"/>
        <dbReference type="ChEBI" id="CHEBI:57540"/>
        <dbReference type="ChEBI" id="CHEBI:57945"/>
        <dbReference type="ChEBI" id="CHEBI:62192"/>
    </reaction>
</comment>
<comment type="catalytic activity">
    <reaction evidence="1">
        <text>a plastoquinone + NADPH + (n+1) H(+)(in) = a plastoquinol + NADP(+) + n H(+)(out)</text>
        <dbReference type="Rhea" id="RHEA:42612"/>
        <dbReference type="Rhea" id="RHEA-COMP:9561"/>
        <dbReference type="Rhea" id="RHEA-COMP:9562"/>
        <dbReference type="ChEBI" id="CHEBI:15378"/>
        <dbReference type="ChEBI" id="CHEBI:17757"/>
        <dbReference type="ChEBI" id="CHEBI:57783"/>
        <dbReference type="ChEBI" id="CHEBI:58349"/>
        <dbReference type="ChEBI" id="CHEBI:62192"/>
    </reaction>
</comment>
<comment type="cofactor">
    <cofactor evidence="1">
        <name>[4Fe-4S] cluster</name>
        <dbReference type="ChEBI" id="CHEBI:49883"/>
    </cofactor>
    <text evidence="1">Binds 1 [4Fe-4S] cluster.</text>
</comment>
<comment type="subunit">
    <text evidence="1">NDH is composed of at least 16 different subunits, 5 of which are encoded in the nucleus.</text>
</comment>
<comment type="subcellular location">
    <subcellularLocation>
        <location evidence="1">Plastid</location>
        <location evidence="1">Chloroplast thylakoid membrane</location>
        <topology evidence="1">Peripheral membrane protein</topology>
        <orientation evidence="1">Stromal side</orientation>
    </subcellularLocation>
</comment>
<comment type="similarity">
    <text evidence="1">Belongs to the complex I 20 kDa subunit family.</text>
</comment>
<reference key="1">
    <citation type="journal article" date="2008" name="Nature">
        <title>The draft genome of the transgenic tropical fruit tree papaya (Carica papaya Linnaeus).</title>
        <authorList>
            <person name="Ming R."/>
            <person name="Hou S."/>
            <person name="Feng Y."/>
            <person name="Yu Q."/>
            <person name="Dionne-Laporte A."/>
            <person name="Saw J.H."/>
            <person name="Senin P."/>
            <person name="Wang W."/>
            <person name="Ly B.V."/>
            <person name="Lewis K.L."/>
            <person name="Salzberg S.L."/>
            <person name="Feng L."/>
            <person name="Jones M.R."/>
            <person name="Skelton R.L."/>
            <person name="Murray J.E."/>
            <person name="Chen C."/>
            <person name="Qian W."/>
            <person name="Shen J."/>
            <person name="Du P."/>
            <person name="Eustice M."/>
            <person name="Tong E."/>
            <person name="Tang H."/>
            <person name="Lyons E."/>
            <person name="Paull R.E."/>
            <person name="Michael T.P."/>
            <person name="Wall K."/>
            <person name="Rice D.W."/>
            <person name="Albert H."/>
            <person name="Wang M.L."/>
            <person name="Zhu Y.J."/>
            <person name="Schatz M."/>
            <person name="Nagarajan N."/>
            <person name="Acob R.A."/>
            <person name="Guan P."/>
            <person name="Blas A."/>
            <person name="Wai C.M."/>
            <person name="Ackerman C.M."/>
            <person name="Ren Y."/>
            <person name="Liu C."/>
            <person name="Wang J."/>
            <person name="Wang J."/>
            <person name="Na J.K."/>
            <person name="Shakirov E.V."/>
            <person name="Haas B."/>
            <person name="Thimmapuram J."/>
            <person name="Nelson D."/>
            <person name="Wang X."/>
            <person name="Bowers J.E."/>
            <person name="Gschwend A.R."/>
            <person name="Delcher A.L."/>
            <person name="Singh R."/>
            <person name="Suzuki J.Y."/>
            <person name="Tripathi S."/>
            <person name="Neupane K."/>
            <person name="Wei H."/>
            <person name="Irikura B."/>
            <person name="Paidi M."/>
            <person name="Jiang N."/>
            <person name="Zhang W."/>
            <person name="Presting G."/>
            <person name="Windsor A."/>
            <person name="Navajas-Perez R."/>
            <person name="Torres M.J."/>
            <person name="Feltus F.A."/>
            <person name="Porter B."/>
            <person name="Li Y."/>
            <person name="Burroughs A.M."/>
            <person name="Luo M.C."/>
            <person name="Liu L."/>
            <person name="Christopher D.A."/>
            <person name="Mount S.M."/>
            <person name="Moore P.H."/>
            <person name="Sugimura T."/>
            <person name="Jiang J."/>
            <person name="Schuler M.A."/>
            <person name="Friedman V."/>
            <person name="Mitchell-Olds T."/>
            <person name="Shippen D.E."/>
            <person name="dePamphilis C.W."/>
            <person name="Palmer J.D."/>
            <person name="Freeling M."/>
            <person name="Paterson A.H."/>
            <person name="Gonsalves D."/>
            <person name="Wang L."/>
            <person name="Alam M."/>
        </authorList>
    </citation>
    <scope>NUCLEOTIDE SEQUENCE [LARGE SCALE GENOMIC DNA]</scope>
    <source>
        <strain>cv. SunUp</strain>
    </source>
</reference>
<keyword id="KW-0004">4Fe-4S</keyword>
<keyword id="KW-0150">Chloroplast</keyword>
<keyword id="KW-0408">Iron</keyword>
<keyword id="KW-0411">Iron-sulfur</keyword>
<keyword id="KW-0472">Membrane</keyword>
<keyword id="KW-0479">Metal-binding</keyword>
<keyword id="KW-0520">NAD</keyword>
<keyword id="KW-0521">NADP</keyword>
<keyword id="KW-0934">Plastid</keyword>
<keyword id="KW-0618">Plastoquinone</keyword>
<keyword id="KW-0874">Quinone</keyword>
<keyword id="KW-0793">Thylakoid</keyword>
<keyword id="KW-1278">Translocase</keyword>
<keyword id="KW-0813">Transport</keyword>
<organism>
    <name type="scientific">Carica papaya</name>
    <name type="common">Papaya</name>
    <dbReference type="NCBI Taxonomy" id="3649"/>
    <lineage>
        <taxon>Eukaryota</taxon>
        <taxon>Viridiplantae</taxon>
        <taxon>Streptophyta</taxon>
        <taxon>Embryophyta</taxon>
        <taxon>Tracheophyta</taxon>
        <taxon>Spermatophyta</taxon>
        <taxon>Magnoliopsida</taxon>
        <taxon>eudicotyledons</taxon>
        <taxon>Gunneridae</taxon>
        <taxon>Pentapetalae</taxon>
        <taxon>rosids</taxon>
        <taxon>malvids</taxon>
        <taxon>Brassicales</taxon>
        <taxon>Caricaceae</taxon>
        <taxon>Carica</taxon>
    </lineage>
</organism>
<accession>B1A939</accession>
<sequence length="225" mass="25430">MNSIEFPLLDRTTQNSVISTTLNDLSNWSRLSSLWPLLYGTSCCFIEFASLIGSRFDFDRYGLVPRSSPRQADLILTAGTVTMKMAPSLVRLYEQMPEPKYVIAMGACTITGGMFSTDSYSTVRGVDKLIPVDVYLPGCPPKPEAVIDAITKLRKKISREIYEDRIRSQQGNRCFTTNHKFLFVRSTHTGNYDQELLYQPSSTSEIPTETFFKYKSSVSSRELVN</sequence>
<dbReference type="EC" id="7.1.1.-" evidence="1"/>
<dbReference type="EMBL" id="EU431223">
    <property type="protein sequence ID" value="ABY86786.1"/>
    <property type="molecule type" value="Genomic_DNA"/>
</dbReference>
<dbReference type="RefSeq" id="YP_001671687.1">
    <property type="nucleotide sequence ID" value="NC_010323.1"/>
</dbReference>
<dbReference type="SMR" id="B1A939"/>
<dbReference type="GeneID" id="5878350"/>
<dbReference type="KEGG" id="cpap:5878350"/>
<dbReference type="OrthoDB" id="1040038at2759"/>
<dbReference type="GO" id="GO:0009535">
    <property type="term" value="C:chloroplast thylakoid membrane"/>
    <property type="evidence" value="ECO:0007669"/>
    <property type="project" value="UniProtKB-SubCell"/>
</dbReference>
<dbReference type="GO" id="GO:0045271">
    <property type="term" value="C:respiratory chain complex I"/>
    <property type="evidence" value="ECO:0007669"/>
    <property type="project" value="TreeGrafter"/>
</dbReference>
<dbReference type="GO" id="GO:0051539">
    <property type="term" value="F:4 iron, 4 sulfur cluster binding"/>
    <property type="evidence" value="ECO:0007669"/>
    <property type="project" value="UniProtKB-KW"/>
</dbReference>
<dbReference type="GO" id="GO:0005506">
    <property type="term" value="F:iron ion binding"/>
    <property type="evidence" value="ECO:0007669"/>
    <property type="project" value="UniProtKB-UniRule"/>
</dbReference>
<dbReference type="GO" id="GO:0008137">
    <property type="term" value="F:NADH dehydrogenase (ubiquinone) activity"/>
    <property type="evidence" value="ECO:0007669"/>
    <property type="project" value="InterPro"/>
</dbReference>
<dbReference type="GO" id="GO:0048038">
    <property type="term" value="F:quinone binding"/>
    <property type="evidence" value="ECO:0007669"/>
    <property type="project" value="UniProtKB-KW"/>
</dbReference>
<dbReference type="GO" id="GO:0009060">
    <property type="term" value="P:aerobic respiration"/>
    <property type="evidence" value="ECO:0007669"/>
    <property type="project" value="TreeGrafter"/>
</dbReference>
<dbReference type="GO" id="GO:0015990">
    <property type="term" value="P:electron transport coupled proton transport"/>
    <property type="evidence" value="ECO:0007669"/>
    <property type="project" value="TreeGrafter"/>
</dbReference>
<dbReference type="GO" id="GO:0019684">
    <property type="term" value="P:photosynthesis, light reaction"/>
    <property type="evidence" value="ECO:0007669"/>
    <property type="project" value="UniProtKB-UniRule"/>
</dbReference>
<dbReference type="FunFam" id="3.40.50.12280:FF:000003">
    <property type="entry name" value="NAD(P)H-quinone oxidoreductase subunit K, chloroplastic"/>
    <property type="match status" value="1"/>
</dbReference>
<dbReference type="Gene3D" id="3.40.50.12280">
    <property type="match status" value="1"/>
</dbReference>
<dbReference type="HAMAP" id="MF_01356">
    <property type="entry name" value="NDH1_NuoB"/>
    <property type="match status" value="1"/>
</dbReference>
<dbReference type="InterPro" id="IPR006137">
    <property type="entry name" value="NADH_UbQ_OxRdtase-like_20kDa"/>
</dbReference>
<dbReference type="InterPro" id="IPR006138">
    <property type="entry name" value="NADH_UQ_OxRdtase_20Kd_su"/>
</dbReference>
<dbReference type="NCBIfam" id="TIGR01957">
    <property type="entry name" value="nuoB_fam"/>
    <property type="match status" value="1"/>
</dbReference>
<dbReference type="NCBIfam" id="NF005012">
    <property type="entry name" value="PRK06411.1"/>
    <property type="match status" value="1"/>
</dbReference>
<dbReference type="PANTHER" id="PTHR11995">
    <property type="entry name" value="NADH DEHYDROGENASE"/>
    <property type="match status" value="1"/>
</dbReference>
<dbReference type="PANTHER" id="PTHR11995:SF14">
    <property type="entry name" value="NADH DEHYDROGENASE [UBIQUINONE] IRON-SULFUR PROTEIN 7, MITOCHONDRIAL"/>
    <property type="match status" value="1"/>
</dbReference>
<dbReference type="Pfam" id="PF01058">
    <property type="entry name" value="Oxidored_q6"/>
    <property type="match status" value="1"/>
</dbReference>
<dbReference type="SUPFAM" id="SSF56770">
    <property type="entry name" value="HydA/Nqo6-like"/>
    <property type="match status" value="1"/>
</dbReference>
<dbReference type="PROSITE" id="PS01150">
    <property type="entry name" value="COMPLEX1_20K"/>
    <property type="match status" value="1"/>
</dbReference>
<gene>
    <name evidence="1" type="primary">ndhK</name>
</gene>
<evidence type="ECO:0000255" key="1">
    <source>
        <dbReference type="HAMAP-Rule" id="MF_01356"/>
    </source>
</evidence>
<proteinExistence type="inferred from homology"/>